<sequence length="359" mass="38210">MSPTPRRRATLASLAAELKVSRTTVSNAFNRPDQLSADLRERVLATAKRLGYAGPDPVARSLRTRKAGAVGLVMAEPLTYFFSDPAARDFVAGVAQSCEELGQGLQLVSVGSSRSLADGTAAVLGAGVDGFVVYSVGDDDPYLQVVLQRRLPVVVVDQPKDLSGVSRVGIDDRAAMRELAGYVLGLGHRELGLLTMRLGRDRRQDLVDAERLRSPTFDVQRERIVGVWEAMTAAGVDPDSLTVVESYEHLPTSGGTAAKVALQANPRLTALMCTADILALSAMDYLRAHGIYVPGQMTVTGFDGVPEALSRGLTTVAQPSLHKGHRAGELLLKPPRSGLPVIEVLDTELVRGRTAGPPA</sequence>
<proteinExistence type="evidence at protein level"/>
<accession>P96857</accession>
<accession>I6XHL1</accession>
<feature type="chain" id="PRO_0000461899" description="HTH-type transcriptional regulator Rv3575c">
    <location>
        <begin position="1"/>
        <end position="359"/>
    </location>
</feature>
<feature type="domain" description="HTH lacI-type" evidence="1">
    <location>
        <begin position="9"/>
        <end position="64"/>
    </location>
</feature>
<feature type="DNA-binding region" description="H-T-H motif" evidence="1">
    <location>
        <begin position="11"/>
        <end position="30"/>
    </location>
</feature>
<reference key="1">
    <citation type="journal article" date="1998" name="Nature">
        <title>Deciphering the biology of Mycobacterium tuberculosis from the complete genome sequence.</title>
        <authorList>
            <person name="Cole S.T."/>
            <person name="Brosch R."/>
            <person name="Parkhill J."/>
            <person name="Garnier T."/>
            <person name="Churcher C.M."/>
            <person name="Harris D.E."/>
            <person name="Gordon S.V."/>
            <person name="Eiglmeier K."/>
            <person name="Gas S."/>
            <person name="Barry C.E. III"/>
            <person name="Tekaia F."/>
            <person name="Badcock K."/>
            <person name="Basham D."/>
            <person name="Brown D."/>
            <person name="Chillingworth T."/>
            <person name="Connor R."/>
            <person name="Davies R.M."/>
            <person name="Devlin K."/>
            <person name="Feltwell T."/>
            <person name="Gentles S."/>
            <person name="Hamlin N."/>
            <person name="Holroyd S."/>
            <person name="Hornsby T."/>
            <person name="Jagels K."/>
            <person name="Krogh A."/>
            <person name="McLean J."/>
            <person name="Moule S."/>
            <person name="Murphy L.D."/>
            <person name="Oliver S."/>
            <person name="Osborne J."/>
            <person name="Quail M.A."/>
            <person name="Rajandream M.A."/>
            <person name="Rogers J."/>
            <person name="Rutter S."/>
            <person name="Seeger K."/>
            <person name="Skelton S."/>
            <person name="Squares S."/>
            <person name="Squares R."/>
            <person name="Sulston J.E."/>
            <person name="Taylor K."/>
            <person name="Whitehead S."/>
            <person name="Barrell B.G."/>
        </authorList>
    </citation>
    <scope>NUCLEOTIDE SEQUENCE [LARGE SCALE GENOMIC DNA]</scope>
    <source>
        <strain>ATCC 25618 / H37Rv</strain>
    </source>
</reference>
<reference key="2">
    <citation type="journal article" date="2011" name="Mol. Cell. Proteomics">
        <title>Proteogenomic analysis of Mycobacterium tuberculosis by high resolution mass spectrometry.</title>
        <authorList>
            <person name="Kelkar D.S."/>
            <person name="Kumar D."/>
            <person name="Kumar P."/>
            <person name="Balakrishnan L."/>
            <person name="Muthusamy B."/>
            <person name="Yadav A.K."/>
            <person name="Shrivastava P."/>
            <person name="Marimuthu A."/>
            <person name="Anand S."/>
            <person name="Sundaram H."/>
            <person name="Kingsbury R."/>
            <person name="Harsha H.C."/>
            <person name="Nair B."/>
            <person name="Prasad T.S."/>
            <person name="Chauhan D.S."/>
            <person name="Katoch K."/>
            <person name="Katoch V.M."/>
            <person name="Kumar P."/>
            <person name="Chaerkady R."/>
            <person name="Ramachandran S."/>
            <person name="Dash D."/>
            <person name="Pandey A."/>
        </authorList>
    </citation>
    <scope>IDENTIFICATION BY MASS SPECTROMETRY [LARGE SCALE ANALYSIS]</scope>
    <source>
        <strain>ATCC 25618 / H37Rv</strain>
    </source>
</reference>
<reference key="3">
    <citation type="journal article" date="2024" name="ACS Infect. Dis.">
        <title>Mycobacterium LacI-type Transcription Regulator Rv3575c Affects Host Innate Immunity by Regulating Bacterial mce4 Operon-Mediated Cholesterol Transport.</title>
        <authorList>
            <person name="Zhen J."/>
            <person name="Abuliken Y."/>
            <person name="Yan Y."/>
            <person name="Gao C."/>
            <person name="Jiang Z."/>
            <person name="Huang T."/>
            <person name="Le T.T.T."/>
            <person name="Xiang L."/>
            <person name="Li P."/>
            <person name="Xie J."/>
        </authorList>
    </citation>
    <scope>FUNCTION</scope>
    <scope>DNA-BINDING</scope>
    <scope>OVEREXPRESSION IN M.SMEGMATIS</scope>
</reference>
<organism>
    <name type="scientific">Mycobacterium tuberculosis (strain ATCC 25618 / H37Rv)</name>
    <dbReference type="NCBI Taxonomy" id="83332"/>
    <lineage>
        <taxon>Bacteria</taxon>
        <taxon>Bacillati</taxon>
        <taxon>Actinomycetota</taxon>
        <taxon>Actinomycetes</taxon>
        <taxon>Mycobacteriales</taxon>
        <taxon>Mycobacteriaceae</taxon>
        <taxon>Mycobacterium</taxon>
        <taxon>Mycobacterium tuberculosis complex</taxon>
    </lineage>
</organism>
<gene>
    <name evidence="5" type="ordered locus">Rv3575c</name>
</gene>
<dbReference type="EMBL" id="AL123456">
    <property type="protein sequence ID" value="CCP46398.1"/>
    <property type="molecule type" value="Genomic_DNA"/>
</dbReference>
<dbReference type="RefSeq" id="NP_218092.1">
    <property type="nucleotide sequence ID" value="NC_000962.3"/>
</dbReference>
<dbReference type="RefSeq" id="WP_003419400.1">
    <property type="nucleotide sequence ID" value="NZ_NVQJ01000014.1"/>
</dbReference>
<dbReference type="SMR" id="P96857"/>
<dbReference type="FunCoup" id="P96857">
    <property type="interactions" value="22"/>
</dbReference>
<dbReference type="STRING" id="83332.Rv3575c"/>
<dbReference type="PaxDb" id="83332-Rv3575c"/>
<dbReference type="GeneID" id="888084"/>
<dbReference type="KEGG" id="mtu:Rv3575c"/>
<dbReference type="KEGG" id="mtv:RVBD_3575c"/>
<dbReference type="PATRIC" id="fig|83332.111.peg.3983"/>
<dbReference type="TubercuList" id="Rv3575c"/>
<dbReference type="eggNOG" id="COG1609">
    <property type="taxonomic scope" value="Bacteria"/>
</dbReference>
<dbReference type="InParanoid" id="P96857"/>
<dbReference type="OrthoDB" id="5171752at2"/>
<dbReference type="PhylomeDB" id="P96857"/>
<dbReference type="Proteomes" id="UP000001584">
    <property type="component" value="Chromosome"/>
</dbReference>
<dbReference type="GO" id="GO:0003700">
    <property type="term" value="F:DNA-binding transcription factor activity"/>
    <property type="evidence" value="ECO:0000318"/>
    <property type="project" value="GO_Central"/>
</dbReference>
<dbReference type="GO" id="GO:0000976">
    <property type="term" value="F:transcription cis-regulatory region binding"/>
    <property type="evidence" value="ECO:0000318"/>
    <property type="project" value="GO_Central"/>
</dbReference>
<dbReference type="GO" id="GO:0006355">
    <property type="term" value="P:regulation of DNA-templated transcription"/>
    <property type="evidence" value="ECO:0000318"/>
    <property type="project" value="GO_Central"/>
</dbReference>
<dbReference type="CDD" id="cd01392">
    <property type="entry name" value="HTH_LacI"/>
    <property type="match status" value="1"/>
</dbReference>
<dbReference type="CDD" id="cd06279">
    <property type="entry name" value="PBP1_LacI-like"/>
    <property type="match status" value="1"/>
</dbReference>
<dbReference type="Gene3D" id="3.40.50.2300">
    <property type="match status" value="2"/>
</dbReference>
<dbReference type="Gene3D" id="1.10.260.40">
    <property type="entry name" value="lambda repressor-like DNA-binding domains"/>
    <property type="match status" value="1"/>
</dbReference>
<dbReference type="InterPro" id="IPR000843">
    <property type="entry name" value="HTH_LacI"/>
</dbReference>
<dbReference type="InterPro" id="IPR046335">
    <property type="entry name" value="LacI/GalR-like_sensor"/>
</dbReference>
<dbReference type="InterPro" id="IPR010982">
    <property type="entry name" value="Lambda_DNA-bd_dom_sf"/>
</dbReference>
<dbReference type="InterPro" id="IPR028082">
    <property type="entry name" value="Peripla_BP_I"/>
</dbReference>
<dbReference type="PANTHER" id="PTHR30146">
    <property type="entry name" value="LACI-RELATED TRANSCRIPTIONAL REPRESSOR"/>
    <property type="match status" value="1"/>
</dbReference>
<dbReference type="PANTHER" id="PTHR30146:SF138">
    <property type="entry name" value="TRANSCRIPTIONAL REGULATORY PROTEIN"/>
    <property type="match status" value="1"/>
</dbReference>
<dbReference type="Pfam" id="PF13377">
    <property type="entry name" value="Peripla_BP_3"/>
    <property type="match status" value="1"/>
</dbReference>
<dbReference type="SMART" id="SM00354">
    <property type="entry name" value="HTH_LACI"/>
    <property type="match status" value="1"/>
</dbReference>
<dbReference type="SUPFAM" id="SSF47413">
    <property type="entry name" value="lambda repressor-like DNA-binding domains"/>
    <property type="match status" value="1"/>
</dbReference>
<dbReference type="SUPFAM" id="SSF53822">
    <property type="entry name" value="Periplasmic binding protein-like I"/>
    <property type="match status" value="1"/>
</dbReference>
<dbReference type="PROSITE" id="PS50932">
    <property type="entry name" value="HTH_LACI_2"/>
    <property type="match status" value="1"/>
</dbReference>
<evidence type="ECO:0000255" key="1">
    <source>
        <dbReference type="PROSITE-ProRule" id="PRU00111"/>
    </source>
</evidence>
<evidence type="ECO:0000269" key="2">
    <source>
    </source>
</evidence>
<evidence type="ECO:0000269" key="3">
    <source>
    </source>
</evidence>
<evidence type="ECO:0000305" key="4"/>
<evidence type="ECO:0000312" key="5">
    <source>
        <dbReference type="EMBL" id="CCP46398.1"/>
    </source>
</evidence>
<keyword id="KW-0238">DNA-binding</keyword>
<keyword id="KW-1185">Reference proteome</keyword>
<keyword id="KW-0678">Repressor</keyword>
<keyword id="KW-0804">Transcription</keyword>
<keyword id="KW-0805">Transcription regulation</keyword>
<protein>
    <recommendedName>
        <fullName evidence="4">HTH-type transcriptional regulator Rv3575c</fullName>
    </recommendedName>
</protein>
<comment type="function">
    <text evidence="2">Transcriptional regulator that negatively regulates transcription of the mce4 operon, which is involved in cholesterol transport and utilization (PubMed:39236267). Acts by binding to the promoter region of the mce4 operon (PubMed:39236267). It affects the utilization of host cholesterol as a carbon source, impacting the host's innate immune response (PubMed:39236267).</text>
</comment>
<comment type="miscellaneous">
    <text evidence="3">Overexpression of the gene in M.smegmatis impairs the utilization of cholesterol as the sole carbon source by M.smegmatis, activates the host's innate immune response and triggers cell apoptosis.</text>
</comment>
<name>R3575_MYCTU</name>